<comment type="function">
    <text>May play an important role in the progression of epithelial malignancies.</text>
</comment>
<comment type="cofactor">
    <cofactor>
        <name>Ca(2+)</name>
        <dbReference type="ChEBI" id="CHEBI:29108"/>
    </cofactor>
    <text>Binds 1 Ca(2+) ion per subunit.</text>
</comment>
<comment type="cofactor">
    <cofactor>
        <name>Zn(2+)</name>
        <dbReference type="ChEBI" id="CHEBI:29105"/>
    </cofactor>
    <text>Binds 2 Zn(2+) ions per subunit.</text>
</comment>
<comment type="subcellular location">
    <subcellularLocation>
        <location evidence="3">Secreted</location>
        <location evidence="3">Extracellular space</location>
        <location evidence="3">Extracellular matrix</location>
    </subcellularLocation>
</comment>
<comment type="tissue specificity">
    <text>Specifically expressed in the mammary gland during apoptosis.</text>
</comment>
<comment type="domain">
    <text>The conserved cysteine present in the cysteine-switch motif binds the catalytic zinc ion, thus inhibiting the enzyme. The dissociation of the cysteine from the zinc ion upon the activation-peptide release activates the enzyme.</text>
</comment>
<comment type="PTM">
    <text evidence="1">The precursor is cleaved by a furin endopeptidase.</text>
</comment>
<comment type="similarity">
    <text evidence="3">Belongs to the peptidase M10A family.</text>
</comment>
<gene>
    <name type="primary">Mmp11</name>
</gene>
<sequence length="492" mass="55441">MARAACLLRAISRVLLLPLPLLLLLLLLLPSPLMARARPPESHRHHPVKKGPRLLHAALPNTLTSVPASHWVPSPAGSSRPLRCGVPDLPDVLNARNRQKRFVLSGGRWEKTDLTYRILRFPWQLVREQVRQTVAEALQVWSEVTPLTFTEVHEGRADIMIDFARYWHGDNLPFDGPGGILAHAFFPKTHREGDVHFDYDETWTIGDNQGTDLLQVAAHEFGHVLGLQHTTAAKALMSPFYTFRYPLSLSPDDRRGIQHLYGRPQMAPTSPAPTLSSQAGTDTNEIALLEPETPPDVCETSFDAVSTIRGELFFFKAGFVWRLRSGRLQPGYPALASRHWQGLPSPVDAAFEDAQGQIWFFQGAQYWVYDGEKPVLGPAPLSKLGLQGSPVHAALVWGPEKNKIYFFRGGDYWRFHPRTQRVDNPVPRRSTDWRGVPSEIDAAFQDAEGYAYFLRGHLYWKFDPVKVKVLEGFPRPVGPDFFDCAEPANTFR</sequence>
<dbReference type="EC" id="3.4.24.-"/>
<dbReference type="EMBL" id="Z12604">
    <property type="protein sequence ID" value="CAA78248.1"/>
    <property type="molecule type" value="mRNA"/>
</dbReference>
<dbReference type="CCDS" id="CCDS23937.1"/>
<dbReference type="PIR" id="A44399">
    <property type="entry name" value="A44399"/>
</dbReference>
<dbReference type="RefSeq" id="NP_001293113.1">
    <property type="nucleotide sequence ID" value="NM_001306184.1"/>
</dbReference>
<dbReference type="RefSeq" id="NP_032632.1">
    <property type="nucleotide sequence ID" value="NM_008606.3"/>
</dbReference>
<dbReference type="PDB" id="1HV5">
    <property type="method" value="X-ray"/>
    <property type="resolution" value="2.60 A"/>
    <property type="chains" value="A/B/C/D/E/F=102-265"/>
</dbReference>
<dbReference type="PDBsum" id="1HV5"/>
<dbReference type="SMR" id="Q02853"/>
<dbReference type="BioGRID" id="201444">
    <property type="interactions" value="2"/>
</dbReference>
<dbReference type="FunCoup" id="Q02853">
    <property type="interactions" value="88"/>
</dbReference>
<dbReference type="STRING" id="10090.ENSMUSP00000000924"/>
<dbReference type="BindingDB" id="Q02853"/>
<dbReference type="ChEMBL" id="CHEMBL3412"/>
<dbReference type="MEROPS" id="M10.007"/>
<dbReference type="PhosphoSitePlus" id="Q02853"/>
<dbReference type="PaxDb" id="10090-ENSMUSP00000000924"/>
<dbReference type="ProteomicsDB" id="295684"/>
<dbReference type="Antibodypedia" id="3609">
    <property type="antibodies" value="549 antibodies from 36 providers"/>
</dbReference>
<dbReference type="DNASU" id="17385"/>
<dbReference type="Ensembl" id="ENSMUST00000000924.13">
    <property type="protein sequence ID" value="ENSMUSP00000000924.7"/>
    <property type="gene ID" value="ENSMUSG00000000901.18"/>
</dbReference>
<dbReference type="Ensembl" id="ENSMUST00000120281.8">
    <property type="protein sequence ID" value="ENSMUSP00000112940.2"/>
    <property type="gene ID" value="ENSMUSG00000000901.18"/>
</dbReference>
<dbReference type="GeneID" id="17385"/>
<dbReference type="KEGG" id="mmu:17385"/>
<dbReference type="UCSC" id="uc007fto.1">
    <property type="organism name" value="mouse"/>
</dbReference>
<dbReference type="AGR" id="MGI:97008"/>
<dbReference type="CTD" id="4320"/>
<dbReference type="MGI" id="MGI:97008">
    <property type="gene designation" value="Mmp11"/>
</dbReference>
<dbReference type="VEuPathDB" id="HostDB:ENSMUSG00000000901"/>
<dbReference type="eggNOG" id="KOG1565">
    <property type="taxonomic scope" value="Eukaryota"/>
</dbReference>
<dbReference type="GeneTree" id="ENSGT00940000156340"/>
<dbReference type="HOGENOM" id="CLU_015489_8_3_1"/>
<dbReference type="InParanoid" id="Q02853"/>
<dbReference type="OMA" id="YWRFNPH"/>
<dbReference type="OrthoDB" id="65569at2759"/>
<dbReference type="PhylomeDB" id="Q02853"/>
<dbReference type="TreeFam" id="TF315428"/>
<dbReference type="BRENDA" id="3.4.24.B3">
    <property type="organism ID" value="3474"/>
</dbReference>
<dbReference type="Reactome" id="R-MMU-1442490">
    <property type="pathway name" value="Collagen degradation"/>
</dbReference>
<dbReference type="Reactome" id="R-MMU-1474228">
    <property type="pathway name" value="Degradation of the extracellular matrix"/>
</dbReference>
<dbReference type="Reactome" id="R-MMU-1592389">
    <property type="pathway name" value="Activation of Matrix Metalloproteinases"/>
</dbReference>
<dbReference type="BioGRID-ORCS" id="17385">
    <property type="hits" value="1 hit in 79 CRISPR screens"/>
</dbReference>
<dbReference type="ChiTaRS" id="Mmp11">
    <property type="organism name" value="mouse"/>
</dbReference>
<dbReference type="EvolutionaryTrace" id="Q02853"/>
<dbReference type="PRO" id="PR:Q02853"/>
<dbReference type="Proteomes" id="UP000000589">
    <property type="component" value="Chromosome 10"/>
</dbReference>
<dbReference type="RNAct" id="Q02853">
    <property type="molecule type" value="protein"/>
</dbReference>
<dbReference type="Bgee" id="ENSMUSG00000000901">
    <property type="expression patterns" value="Expressed in floor plate spinal cord region and 189 other cell types or tissues"/>
</dbReference>
<dbReference type="ExpressionAtlas" id="Q02853">
    <property type="expression patterns" value="baseline and differential"/>
</dbReference>
<dbReference type="GO" id="GO:0031012">
    <property type="term" value="C:extracellular matrix"/>
    <property type="evidence" value="ECO:0000266"/>
    <property type="project" value="MGI"/>
</dbReference>
<dbReference type="GO" id="GO:0005576">
    <property type="term" value="C:extracellular region"/>
    <property type="evidence" value="ECO:0007669"/>
    <property type="project" value="UniProtKB-KW"/>
</dbReference>
<dbReference type="GO" id="GO:0004222">
    <property type="term" value="F:metalloendopeptidase activity"/>
    <property type="evidence" value="ECO:0007669"/>
    <property type="project" value="InterPro"/>
</dbReference>
<dbReference type="GO" id="GO:0008237">
    <property type="term" value="F:metallopeptidase activity"/>
    <property type="evidence" value="ECO:0000314"/>
    <property type="project" value="MGI"/>
</dbReference>
<dbReference type="GO" id="GO:0008270">
    <property type="term" value="F:zinc ion binding"/>
    <property type="evidence" value="ECO:0007669"/>
    <property type="project" value="InterPro"/>
</dbReference>
<dbReference type="GO" id="GO:0071711">
    <property type="term" value="P:basement membrane organization"/>
    <property type="evidence" value="ECO:0000315"/>
    <property type="project" value="MGI"/>
</dbReference>
<dbReference type="GO" id="GO:0030574">
    <property type="term" value="P:collagen catabolic process"/>
    <property type="evidence" value="ECO:0000314"/>
    <property type="project" value="MGI"/>
</dbReference>
<dbReference type="GO" id="GO:0030199">
    <property type="term" value="P:collagen fibril organization"/>
    <property type="evidence" value="ECO:0000315"/>
    <property type="project" value="MGI"/>
</dbReference>
<dbReference type="GO" id="GO:0030198">
    <property type="term" value="P:extracellular matrix organization"/>
    <property type="evidence" value="ECO:0000315"/>
    <property type="project" value="MGI"/>
</dbReference>
<dbReference type="GO" id="GO:0045599">
    <property type="term" value="P:negative regulation of fat cell differentiation"/>
    <property type="evidence" value="ECO:0000314"/>
    <property type="project" value="MGI"/>
</dbReference>
<dbReference type="GO" id="GO:0006508">
    <property type="term" value="P:proteolysis"/>
    <property type="evidence" value="ECO:0007669"/>
    <property type="project" value="UniProtKB-KW"/>
</dbReference>
<dbReference type="CDD" id="cd00094">
    <property type="entry name" value="HX"/>
    <property type="match status" value="1"/>
</dbReference>
<dbReference type="CDD" id="cd04278">
    <property type="entry name" value="ZnMc_MMP"/>
    <property type="match status" value="1"/>
</dbReference>
<dbReference type="FunFam" id="2.110.10.10:FF:000005">
    <property type="entry name" value="Stromelysin-3 preproprotein"/>
    <property type="match status" value="1"/>
</dbReference>
<dbReference type="FunFam" id="3.40.390.10:FF:000020">
    <property type="entry name" value="Stromelysin-3 preproprotein"/>
    <property type="match status" value="1"/>
</dbReference>
<dbReference type="Gene3D" id="3.40.390.10">
    <property type="entry name" value="Collagenase (Catalytic Domain)"/>
    <property type="match status" value="1"/>
</dbReference>
<dbReference type="Gene3D" id="2.110.10.10">
    <property type="entry name" value="Hemopexin-like domain"/>
    <property type="match status" value="1"/>
</dbReference>
<dbReference type="InterPro" id="IPR000585">
    <property type="entry name" value="Hemopexin-like_dom"/>
</dbReference>
<dbReference type="InterPro" id="IPR036375">
    <property type="entry name" value="Hemopexin-like_dom_sf"/>
</dbReference>
<dbReference type="InterPro" id="IPR018487">
    <property type="entry name" value="Hemopexin-like_repeat"/>
</dbReference>
<dbReference type="InterPro" id="IPR018486">
    <property type="entry name" value="Hemopexin_CS"/>
</dbReference>
<dbReference type="InterPro" id="IPR033739">
    <property type="entry name" value="M10A_MMP"/>
</dbReference>
<dbReference type="InterPro" id="IPR024079">
    <property type="entry name" value="MetalloPept_cat_dom_sf"/>
</dbReference>
<dbReference type="InterPro" id="IPR001818">
    <property type="entry name" value="Pept_M10_metallopeptidase"/>
</dbReference>
<dbReference type="InterPro" id="IPR021190">
    <property type="entry name" value="Pept_M10A"/>
</dbReference>
<dbReference type="InterPro" id="IPR006026">
    <property type="entry name" value="Peptidase_Metallo"/>
</dbReference>
<dbReference type="PANTHER" id="PTHR10201">
    <property type="entry name" value="MATRIX METALLOPROTEINASE"/>
    <property type="match status" value="1"/>
</dbReference>
<dbReference type="PANTHER" id="PTHR10201:SF20">
    <property type="entry name" value="STROMELYSIN-3"/>
    <property type="match status" value="1"/>
</dbReference>
<dbReference type="Pfam" id="PF00045">
    <property type="entry name" value="Hemopexin"/>
    <property type="match status" value="4"/>
</dbReference>
<dbReference type="Pfam" id="PF00413">
    <property type="entry name" value="Peptidase_M10"/>
    <property type="match status" value="1"/>
</dbReference>
<dbReference type="PIRSF" id="PIRSF001191">
    <property type="entry name" value="Peptidase_M10A_matrix"/>
    <property type="match status" value="1"/>
</dbReference>
<dbReference type="PRINTS" id="PR00138">
    <property type="entry name" value="MATRIXIN"/>
</dbReference>
<dbReference type="SMART" id="SM00120">
    <property type="entry name" value="HX"/>
    <property type="match status" value="4"/>
</dbReference>
<dbReference type="SMART" id="SM00235">
    <property type="entry name" value="ZnMc"/>
    <property type="match status" value="1"/>
</dbReference>
<dbReference type="SUPFAM" id="SSF50923">
    <property type="entry name" value="Hemopexin-like domain"/>
    <property type="match status" value="1"/>
</dbReference>
<dbReference type="SUPFAM" id="SSF55486">
    <property type="entry name" value="Metalloproteases ('zincins'), catalytic domain"/>
    <property type="match status" value="1"/>
</dbReference>
<dbReference type="PROSITE" id="PS00024">
    <property type="entry name" value="HEMOPEXIN"/>
    <property type="match status" value="1"/>
</dbReference>
<dbReference type="PROSITE" id="PS51642">
    <property type="entry name" value="HEMOPEXIN_2"/>
    <property type="match status" value="4"/>
</dbReference>
<dbReference type="PROSITE" id="PS00142">
    <property type="entry name" value="ZINC_PROTEASE"/>
    <property type="match status" value="1"/>
</dbReference>
<accession>Q02853</accession>
<reference key="1">
    <citation type="journal article" date="1992" name="J. Cell Biol.">
        <title>The breast cancer-associated stromelysin-3 gene is expressed during mouse mammary gland apoptosis.</title>
        <authorList>
            <person name="Lefebvre O."/>
            <person name="Wolf C."/>
            <person name="Limacher J.-M."/>
            <person name="Hutin P."/>
            <person name="Wendling C."/>
            <person name="Lemeur M."/>
            <person name="Basset P."/>
            <person name="Rio M.C."/>
        </authorList>
    </citation>
    <scope>NUCLEOTIDE SEQUENCE [MRNA]</scope>
</reference>
<reference key="2">
    <citation type="submission" date="1994-06" db="EMBL/GenBank/DDBJ databases">
        <authorList>
            <person name="Lefebvre O."/>
        </authorList>
    </citation>
    <scope>SEQUENCE REVISION</scope>
</reference>
<reference key="3">
    <citation type="journal article" date="2001" name="J. Mol. Biol.">
        <title>Crystal structure of the stromelysin-3 (MMP-11) catalytic domain complexed with a phosphinic inhibitor mimicking the transition-state.</title>
        <authorList>
            <person name="Gall A.-L."/>
            <person name="Ruff M."/>
            <person name="Kannan R."/>
            <person name="Cuniasse P."/>
            <person name="Yiotakis A."/>
            <person name="Dive V."/>
            <person name="Rio M.-C."/>
            <person name="Basset P."/>
            <person name="Moras D."/>
        </authorList>
    </citation>
    <scope>X-RAY CRYSTALLOGRAPHY (2.6 ANGSTROMS) OF 102-265</scope>
</reference>
<proteinExistence type="evidence at protein level"/>
<organism>
    <name type="scientific">Mus musculus</name>
    <name type="common">Mouse</name>
    <dbReference type="NCBI Taxonomy" id="10090"/>
    <lineage>
        <taxon>Eukaryota</taxon>
        <taxon>Metazoa</taxon>
        <taxon>Chordata</taxon>
        <taxon>Craniata</taxon>
        <taxon>Vertebrata</taxon>
        <taxon>Euteleostomi</taxon>
        <taxon>Mammalia</taxon>
        <taxon>Eutheria</taxon>
        <taxon>Euarchontoglires</taxon>
        <taxon>Glires</taxon>
        <taxon>Rodentia</taxon>
        <taxon>Myomorpha</taxon>
        <taxon>Muroidea</taxon>
        <taxon>Muridae</taxon>
        <taxon>Murinae</taxon>
        <taxon>Mus</taxon>
        <taxon>Mus</taxon>
    </lineage>
</organism>
<name>MMP11_MOUSE</name>
<protein>
    <recommendedName>
        <fullName>Stromelysin-3</fullName>
        <shortName>SL-3</shortName>
        <shortName>ST3</shortName>
        <ecNumber>3.4.24.-</ecNumber>
    </recommendedName>
    <alternativeName>
        <fullName>Matrix metalloproteinase-11</fullName>
        <shortName>MMP-11</shortName>
    </alternativeName>
</protein>
<feature type="signal peptide" evidence="2">
    <location>
        <begin position="1"/>
        <end position="35"/>
    </location>
</feature>
<feature type="propeptide" id="PRO_0000028772" description="Activation peptide" evidence="1">
    <location>
        <begin position="36"/>
        <end position="101"/>
    </location>
</feature>
<feature type="chain" id="PRO_0000028773" description="Stromelysin-3">
    <location>
        <begin position="102"/>
        <end position="492"/>
    </location>
</feature>
<feature type="repeat" description="Hemopexin 1">
    <location>
        <begin position="295"/>
        <end position="343"/>
    </location>
</feature>
<feature type="repeat" description="Hemopexin 2">
    <location>
        <begin position="344"/>
        <end position="386"/>
    </location>
</feature>
<feature type="repeat" description="Hemopexin 3">
    <location>
        <begin position="388"/>
        <end position="436"/>
    </location>
</feature>
<feature type="repeat" description="Hemopexin 4">
    <location>
        <begin position="437"/>
        <end position="484"/>
    </location>
</feature>
<feature type="short sequence motif" description="Cysteine switch" evidence="1">
    <location>
        <begin position="82"/>
        <end position="89"/>
    </location>
</feature>
<feature type="active site">
    <location>
        <position position="220"/>
    </location>
</feature>
<feature type="binding site" description="in inhibited form" evidence="1">
    <location>
        <position position="84"/>
    </location>
    <ligand>
        <name>Zn(2+)</name>
        <dbReference type="ChEBI" id="CHEBI:29105"/>
        <label>2</label>
        <note>catalytic</note>
    </ligand>
</feature>
<feature type="binding site">
    <location>
        <position position="168"/>
    </location>
    <ligand>
        <name>Zn(2+)</name>
        <dbReference type="ChEBI" id="CHEBI:29105"/>
        <label>1</label>
    </ligand>
</feature>
<feature type="binding site">
    <location>
        <position position="170"/>
    </location>
    <ligand>
        <name>Zn(2+)</name>
        <dbReference type="ChEBI" id="CHEBI:29105"/>
        <label>1</label>
    </ligand>
</feature>
<feature type="binding site">
    <location>
        <position position="175"/>
    </location>
    <ligand>
        <name>Ca(2+)</name>
        <dbReference type="ChEBI" id="CHEBI:29108"/>
    </ligand>
</feature>
<feature type="binding site">
    <location>
        <position position="176"/>
    </location>
    <ligand>
        <name>Ca(2+)</name>
        <dbReference type="ChEBI" id="CHEBI:29108"/>
    </ligand>
</feature>
<feature type="binding site">
    <location>
        <position position="178"/>
    </location>
    <ligand>
        <name>Ca(2+)</name>
        <dbReference type="ChEBI" id="CHEBI:29108"/>
    </ligand>
</feature>
<feature type="binding site">
    <location>
        <position position="180"/>
    </location>
    <ligand>
        <name>Ca(2+)</name>
        <dbReference type="ChEBI" id="CHEBI:29108"/>
    </ligand>
</feature>
<feature type="binding site">
    <location>
        <position position="183"/>
    </location>
    <ligand>
        <name>Zn(2+)</name>
        <dbReference type="ChEBI" id="CHEBI:29105"/>
        <label>1</label>
    </ligand>
</feature>
<feature type="binding site">
    <location>
        <position position="196"/>
    </location>
    <ligand>
        <name>Zn(2+)</name>
        <dbReference type="ChEBI" id="CHEBI:29105"/>
        <label>1</label>
    </ligand>
</feature>
<feature type="binding site">
    <location>
        <position position="219"/>
    </location>
    <ligand>
        <name>Zn(2+)</name>
        <dbReference type="ChEBI" id="CHEBI:29105"/>
        <label>2</label>
        <note>catalytic</note>
    </ligand>
</feature>
<feature type="binding site">
    <location>
        <position position="223"/>
    </location>
    <ligand>
        <name>Zn(2+)</name>
        <dbReference type="ChEBI" id="CHEBI:29105"/>
        <label>2</label>
        <note>catalytic</note>
    </ligand>
</feature>
<feature type="binding site">
    <location>
        <position position="229"/>
    </location>
    <ligand>
        <name>Zn(2+)</name>
        <dbReference type="ChEBI" id="CHEBI:29105"/>
        <label>2</label>
        <note>catalytic</note>
    </ligand>
</feature>
<feature type="disulfide bond" evidence="1">
    <location>
        <begin position="298"/>
        <end position="484"/>
    </location>
</feature>
<feature type="strand" evidence="4">
    <location>
        <begin position="102"/>
        <end position="105"/>
    </location>
</feature>
<feature type="strand" evidence="4">
    <location>
        <begin position="108"/>
        <end position="111"/>
    </location>
</feature>
<feature type="strand" evidence="4">
    <location>
        <begin position="113"/>
        <end position="118"/>
    </location>
</feature>
<feature type="helix" evidence="4">
    <location>
        <begin position="127"/>
        <end position="142"/>
    </location>
</feature>
<feature type="strand" evidence="4">
    <location>
        <begin position="148"/>
        <end position="151"/>
    </location>
</feature>
<feature type="strand" evidence="4">
    <location>
        <begin position="153"/>
        <end position="156"/>
    </location>
</feature>
<feature type="strand" evidence="4">
    <location>
        <begin position="158"/>
        <end position="164"/>
    </location>
</feature>
<feature type="strand" evidence="4">
    <location>
        <begin position="168"/>
        <end position="171"/>
    </location>
</feature>
<feature type="strand" evidence="4">
    <location>
        <begin position="176"/>
        <end position="179"/>
    </location>
</feature>
<feature type="strand" evidence="4">
    <location>
        <begin position="182"/>
        <end position="185"/>
    </location>
</feature>
<feature type="strand" evidence="4">
    <location>
        <begin position="190"/>
        <end position="198"/>
    </location>
</feature>
<feature type="strand" evidence="4">
    <location>
        <begin position="203"/>
        <end position="206"/>
    </location>
</feature>
<feature type="strand" evidence="4">
    <location>
        <begin position="208"/>
        <end position="212"/>
    </location>
</feature>
<feature type="helix" evidence="4">
    <location>
        <begin position="213"/>
        <end position="224"/>
    </location>
</feature>
<feature type="helix" evidence="4">
    <location>
        <begin position="251"/>
        <end position="260"/>
    </location>
</feature>
<evidence type="ECO:0000250" key="1"/>
<evidence type="ECO:0000255" key="2"/>
<evidence type="ECO:0000305" key="3"/>
<evidence type="ECO:0007829" key="4">
    <source>
        <dbReference type="PDB" id="1HV5"/>
    </source>
</evidence>
<keyword id="KW-0002">3D-structure</keyword>
<keyword id="KW-0106">Calcium</keyword>
<keyword id="KW-0165">Cleavage on pair of basic residues</keyword>
<keyword id="KW-0177">Collagen degradation</keyword>
<keyword id="KW-1015">Disulfide bond</keyword>
<keyword id="KW-0272">Extracellular matrix</keyword>
<keyword id="KW-0378">Hydrolase</keyword>
<keyword id="KW-0479">Metal-binding</keyword>
<keyword id="KW-0482">Metalloprotease</keyword>
<keyword id="KW-0645">Protease</keyword>
<keyword id="KW-1185">Reference proteome</keyword>
<keyword id="KW-0677">Repeat</keyword>
<keyword id="KW-0964">Secreted</keyword>
<keyword id="KW-0732">Signal</keyword>
<keyword id="KW-0862">Zinc</keyword>
<keyword id="KW-0865">Zymogen</keyword>